<organism>
    <name type="scientific">Homo sapiens</name>
    <name type="common">Human</name>
    <dbReference type="NCBI Taxonomy" id="9606"/>
    <lineage>
        <taxon>Eukaryota</taxon>
        <taxon>Metazoa</taxon>
        <taxon>Chordata</taxon>
        <taxon>Craniata</taxon>
        <taxon>Vertebrata</taxon>
        <taxon>Euteleostomi</taxon>
        <taxon>Mammalia</taxon>
        <taxon>Eutheria</taxon>
        <taxon>Euarchontoglires</taxon>
        <taxon>Primates</taxon>
        <taxon>Haplorrhini</taxon>
        <taxon>Catarrhini</taxon>
        <taxon>Hominidae</taxon>
        <taxon>Homo</taxon>
    </lineage>
</organism>
<gene>
    <name type="primary">PALLD</name>
    <name type="synonym">KIAA0992</name>
    <name type="ORF">CGI-151</name>
</gene>
<evidence type="ECO:0000250" key="1"/>
<evidence type="ECO:0000250" key="2">
    <source>
        <dbReference type="UniProtKB" id="P0C5E3"/>
    </source>
</evidence>
<evidence type="ECO:0000250" key="3">
    <source>
        <dbReference type="UniProtKB" id="Q9ET54"/>
    </source>
</evidence>
<evidence type="ECO:0000255" key="4">
    <source>
        <dbReference type="PROSITE-ProRule" id="PRU00114"/>
    </source>
</evidence>
<evidence type="ECO:0000256" key="5">
    <source>
        <dbReference type="SAM" id="MobiDB-lite"/>
    </source>
</evidence>
<evidence type="ECO:0000269" key="6">
    <source>
    </source>
</evidence>
<evidence type="ECO:0000269" key="7">
    <source>
    </source>
</evidence>
<evidence type="ECO:0000269" key="8">
    <source>
    </source>
</evidence>
<evidence type="ECO:0000269" key="9">
    <source>
    </source>
</evidence>
<evidence type="ECO:0000269" key="10">
    <source>
    </source>
</evidence>
<evidence type="ECO:0000269" key="11">
    <source>
    </source>
</evidence>
<evidence type="ECO:0000269" key="12">
    <source>
    </source>
</evidence>
<evidence type="ECO:0000269" key="13">
    <source>
    </source>
</evidence>
<evidence type="ECO:0000269" key="14">
    <source>
    </source>
</evidence>
<evidence type="ECO:0000269" key="15">
    <source>
    </source>
</evidence>
<evidence type="ECO:0000269" key="16">
    <source>
    </source>
</evidence>
<evidence type="ECO:0000269" key="17">
    <source>
    </source>
</evidence>
<evidence type="ECO:0000269" key="18">
    <source>
    </source>
</evidence>
<evidence type="ECO:0000303" key="19">
    <source>
    </source>
</evidence>
<evidence type="ECO:0000303" key="20">
    <source>
    </source>
</evidence>
<evidence type="ECO:0000303" key="21">
    <source>
    </source>
</evidence>
<evidence type="ECO:0000303" key="22">
    <source>
    </source>
</evidence>
<evidence type="ECO:0000303" key="23">
    <source>
    </source>
</evidence>
<evidence type="ECO:0000303" key="24">
    <source ref="1"/>
</evidence>
<evidence type="ECO:0000303" key="25">
    <source ref="2"/>
</evidence>
<evidence type="ECO:0000305" key="26"/>
<evidence type="ECO:0007744" key="27">
    <source>
    </source>
</evidence>
<evidence type="ECO:0007744" key="28">
    <source>
    </source>
</evidence>
<evidence type="ECO:0007744" key="29">
    <source>
    </source>
</evidence>
<evidence type="ECO:0007744" key="30">
    <source>
    </source>
</evidence>
<evidence type="ECO:0007744" key="31">
    <source>
    </source>
</evidence>
<evidence type="ECO:0007744" key="32">
    <source>
    </source>
</evidence>
<evidence type="ECO:0007744" key="33">
    <source>
    </source>
</evidence>
<evidence type="ECO:0007744" key="34">
    <source>
    </source>
</evidence>
<evidence type="ECO:0007829" key="35">
    <source>
        <dbReference type="PDB" id="2DM2"/>
    </source>
</evidence>
<evidence type="ECO:0007829" key="36">
    <source>
        <dbReference type="PDB" id="2DM3"/>
    </source>
</evidence>
<proteinExistence type="evidence at protein level"/>
<keyword id="KW-0002">3D-structure</keyword>
<keyword id="KW-0009">Actin-binding</keyword>
<keyword id="KW-0025">Alternative splicing</keyword>
<keyword id="KW-0965">Cell junction</keyword>
<keyword id="KW-0966">Cell projection</keyword>
<keyword id="KW-0963">Cytoplasm</keyword>
<keyword id="KW-0206">Cytoskeleton</keyword>
<keyword id="KW-1015">Disulfide bond</keyword>
<keyword id="KW-0393">Immunoglobulin domain</keyword>
<keyword id="KW-0597">Phosphoprotein</keyword>
<keyword id="KW-1267">Proteomics identification</keyword>
<keyword id="KW-1185">Reference proteome</keyword>
<keyword id="KW-0677">Repeat</keyword>
<accession>Q8WX93</accession>
<accession>B3KTG2</accession>
<accession>B5MD56</accession>
<accession>B7ZMM5</accession>
<accession>Q7L3E0</accession>
<accession>Q7Z3W0</accession>
<accession>Q86WE8</accession>
<accession>Q8N1M2</accession>
<accession>Q9UGA0</accession>
<accession>Q9UQF5</accession>
<accession>Q9Y2J6</accession>
<accession>Q9Y3E9</accession>
<comment type="function">
    <text evidence="6 8 17">Cytoskeletal protein required for organization of normal actin cytoskeleton. Roles in establishing cell morphology, motility, cell adhesion and cell-extracellular matrix interactions in a variety of cell types. May function as a scaffolding molecule with the potential to influence both actin polymerization and the assembly of existing actin filaments into higher-order arrays. Binds to proteins that bind to either monomeric or filamentous actin. Localizes at sites where active actin remodeling takes place, such as lamellipodia and membrane ruffles. Different isoforms may have functional differences. Involved in the control of morphological and cytoskeletal changes associated with dendritic cell maturation. Involved in targeting ACTN to specific subcellular foci.</text>
</comment>
<comment type="subunit">
    <text evidence="2 3 6 8 9 11 14 17">Interacts with EPS8 (By similarity). Interacts with LASP1 (By similarity). Interacts with VASP (By similarity). Interacts with ACTN (PubMed:15147863). Interacts with SORBS2 (PubMed:16125169). Interacts with PFN1 (PubMed:16367745). Interacts with LPP (PubMed:17322171). Interacts with SPIN90 (PubMed:17537434). Interacts with SRC (PubMed:17537434). Interacts with EZR (PubMed:11598191). Interacts with RAI14 (By similarity).</text>
</comment>
<comment type="interaction">
    <interactant intactId="EBI-2803991">
        <id>Q8WX93</id>
    </interactant>
    <interactant intactId="EBI-745080">
        <id>Q9NZQ3</id>
        <label>NCKIPSD</label>
    </interactant>
    <organismsDiffer>false</organismsDiffer>
    <experiments>3</experiments>
</comment>
<comment type="interaction">
    <interactant intactId="EBI-2803991">
        <id>Q8WX93</id>
    </interactant>
    <interactant intactId="EBI-311323">
        <id>O94875</id>
        <label>SORBS2</label>
    </interactant>
    <organismsDiffer>false</organismsDiffer>
    <experiments>2</experiments>
</comment>
<comment type="interaction">
    <interactant intactId="EBI-12218525">
        <id>Q8WX93-2</id>
    </interactant>
    <interactant intactId="EBI-12017090">
        <id>Q9NSB8-2</id>
        <label>HOMER2</label>
    </interactant>
    <organismsDiffer>false</organismsDiffer>
    <experiments>3</experiments>
</comment>
<comment type="interaction">
    <interactant intactId="EBI-12218525">
        <id>Q8WX93-2</id>
    </interactant>
    <interactant intactId="EBI-748420">
        <id>Q9NSC5</id>
        <label>HOMER3</label>
    </interactant>
    <organismsDiffer>false</organismsDiffer>
    <experiments>3</experiments>
</comment>
<comment type="subcellular location">
    <subcellularLocation>
        <location evidence="6 14 17">Cytoplasm</location>
        <location evidence="6 14 17">Cytoskeleton</location>
    </subcellularLocation>
    <subcellularLocation>
        <location evidence="14">Cell junction</location>
        <location evidence="14">Focal adhesion</location>
    </subcellularLocation>
    <subcellularLocation>
        <location evidence="9">Cytoplasm</location>
        <location evidence="9">Myofibril</location>
        <location evidence="9">Sarcomere</location>
        <location evidence="9">Z line</location>
    </subcellularLocation>
    <subcellularLocation>
        <location evidence="17">Cell projection</location>
        <location evidence="17">Ruffle</location>
    </subcellularLocation>
    <subcellularLocation>
        <location evidence="2">Cell projection</location>
        <location evidence="2">Podosome</location>
    </subcellularLocation>
    <subcellularLocation>
        <location evidence="17">Cell projection</location>
        <location evidence="17">Lamellipodium</location>
    </subcellularLocation>
    <subcellularLocation>
        <location evidence="2">Cell projection</location>
        <location evidence="2">Axon</location>
    </subcellularLocation>
    <subcellularLocation>
        <location evidence="2">Cell projection</location>
        <location evidence="2">Growth cone</location>
    </subcellularLocation>
    <text evidence="2 6 9 14 17">Localizes to stress fibers and Z lines (PubMed:11598191, PubMed:16125169, PubMed:17322171, PubMed:17537434). Preferentially expressed in the excitatory presynaptic terminals (By similarity).</text>
</comment>
<comment type="alternative products">
    <event type="alternative splicing"/>
    <isoform>
        <id>Q8WX93-1</id>
        <name>1</name>
        <name>200-kDa</name>
        <sequence type="displayed"/>
    </isoform>
    <isoform>
        <id>Q8WX93-2</id>
        <name>2</name>
        <sequence type="described" ref="VSP_027929 VSP_027930"/>
    </isoform>
    <isoform>
        <id>Q8WX93-3</id>
        <name>3</name>
        <name>140-kDa</name>
        <sequence type="described" ref="VSP_027927"/>
    </isoform>
    <isoform>
        <id>Q8WX93-4</id>
        <name>4</name>
        <name>90-kDa</name>
        <sequence type="described" ref="VSP_027926"/>
    </isoform>
    <isoform>
        <id>Q8WX93-5</id>
        <name>5</name>
        <sequence type="described" ref="VSP_027929"/>
    </isoform>
    <isoform>
        <id>Q8WX93-6</id>
        <name>6</name>
        <sequence type="described" ref="VSP_027928"/>
    </isoform>
    <isoform>
        <id>Q8WX93-7</id>
        <name>7</name>
        <sequence type="described" ref="VSP_027925"/>
    </isoform>
    <isoform>
        <id>Q8WX93-8</id>
        <name>8</name>
        <sequence type="described" ref="VSP_027927 VSP_027929"/>
    </isoform>
    <isoform>
        <id>Q8WX93-9</id>
        <name>9</name>
        <sequence type="described" ref="VSP_027929 VSP_043794 VSP_043795"/>
    </isoform>
</comment>
<comment type="tissue specificity">
    <text evidence="6">Detected in both muscle and non-muscle tissues. High expression in prostate, ovary, colon, and kidney. Not detected in spleen, skeletal muscle, lung and peripheral blood lymphocytes (at protein level). Protein is overexpressed in FA6, HPAF, IMIM-PC2, SUIT-2 and PancTu-II sporadic pancreatic cancer cell lines.</text>
</comment>
<comment type="induction">
    <text evidence="12">Isoform 3 is expressed de novo. Isoform 4 is up-regulated by TGFB1 during myofibroblast differentiation.</text>
</comment>
<comment type="PTM">
    <text evidence="1 17 18">Phosphorylated predominantly on serines and, to a lesser extent, on tyrosines (By similarity). Phosphorylation at Ser-1118 by PKB/AKT1 modulates cytoskeletal organization and cell motility.</text>
</comment>
<comment type="disease" evidence="13 15 16">
    <disease id="DI-02849">
        <name>Pancreatic cancer 1</name>
        <acronym>PNCA1</acronym>
        <description>A malignant neoplasm of the pancreas. Tumors can arise from both the exocrine and endocrine portions of the pancreas, but 95% of them develop from the exocrine portion, including the ductal epithelium, acinar cells, connective tissue, and lymphatic tissue.</description>
        <dbReference type="MIM" id="606856"/>
    </disease>
    <text>Disease susceptibility is associated with variants affecting the gene represented in this entry.</text>
</comment>
<comment type="disease">
    <text evidence="10">Genetic variations in PALLD may be associated with susceptibility to myocardial infarction.</text>
</comment>
<comment type="similarity">
    <text evidence="26">Belongs to the myotilin/palladin family.</text>
</comment>
<comment type="caution">
    <text evidence="26">Was wrongly assigned as myoneurin (Ref.2).</text>
</comment>
<comment type="sequence caution" evidence="26">
    <conflict type="erroneous initiation">
        <sequence resource="EMBL-CDS" id="AAD34146"/>
    </conflict>
    <text>Extended N-terminus.</text>
</comment>
<comment type="sequence caution" evidence="26">
    <conflict type="frameshift">
        <sequence resource="EMBL-CDS" id="AAO65174"/>
    </conflict>
</comment>
<comment type="sequence caution" evidence="26">
    <conflict type="erroneous initiation">
        <sequence resource="EMBL-CDS" id="BAA76836"/>
    </conflict>
    <text>Extended N-terminus.</text>
</comment>
<comment type="sequence caution" evidence="26">
    <conflict type="erroneous initiation">
        <sequence resource="EMBL-CDS" id="BAC04796"/>
    </conflict>
    <text>Truncated N-terminus.</text>
</comment>
<feature type="chain" id="PRO_0000302720" description="Palladin">
    <location>
        <begin position="1"/>
        <end position="1383"/>
    </location>
</feature>
<feature type="domain" description="Ig-like C2-type 1">
    <location>
        <begin position="271"/>
        <end position="360"/>
    </location>
</feature>
<feature type="domain" description="Ig-like C2-type 2">
    <location>
        <begin position="440"/>
        <end position="539"/>
    </location>
</feature>
<feature type="domain" description="Ig-like C2-type 3">
    <location>
        <begin position="1001"/>
        <end position="1085"/>
    </location>
</feature>
<feature type="domain" description="Ig-like C2-type 4">
    <location>
        <begin position="1135"/>
        <end position="1226"/>
    </location>
</feature>
<feature type="domain" description="Ig-like C2-type 5">
    <location>
        <begin position="1233"/>
        <end position="1324"/>
    </location>
</feature>
<feature type="region of interest" description="Disordered" evidence="5">
    <location>
        <begin position="1"/>
        <end position="22"/>
    </location>
</feature>
<feature type="region of interest" description="Disordered" evidence="5">
    <location>
        <begin position="52"/>
        <end position="169"/>
    </location>
</feature>
<feature type="region of interest" description="Disordered" evidence="5">
    <location>
        <begin position="183"/>
        <end position="238"/>
    </location>
</feature>
<feature type="region of interest" description="Interaction with VASP" evidence="1">
    <location>
        <begin position="562"/>
        <end position="566"/>
    </location>
</feature>
<feature type="region of interest" description="Disordered" evidence="5">
    <location>
        <begin position="609"/>
        <end position="653"/>
    </location>
</feature>
<feature type="region of interest" description="Interaction with LASP1" evidence="1">
    <location>
        <begin position="646"/>
        <end position="676"/>
    </location>
</feature>
<feature type="region of interest" description="Disordered" evidence="5">
    <location>
        <begin position="673"/>
        <end position="728"/>
    </location>
</feature>
<feature type="region of interest" description="Interaction with SORBS2, SPIN90 and SRC" evidence="9">
    <location>
        <begin position="676"/>
        <end position="696"/>
    </location>
</feature>
<feature type="region of interest" description="Disordered" evidence="5">
    <location>
        <begin position="740"/>
        <end position="846"/>
    </location>
</feature>
<feature type="region of interest" description="Interaction with EPS8" evidence="1">
    <location>
        <begin position="766"/>
        <end position="831"/>
    </location>
</feature>
<feature type="region of interest" description="Interaction with SORBS2, SPIN90, SRC and PFN1" evidence="9 11">
    <location>
        <begin position="796"/>
        <end position="831"/>
    </location>
</feature>
<feature type="region of interest" description="Interaction with VASP" evidence="1">
    <location>
        <begin position="819"/>
        <end position="823"/>
    </location>
</feature>
<feature type="region of interest" description="Interaction with ACTN" evidence="8">
    <location>
        <begin position="833"/>
        <end position="890"/>
    </location>
</feature>
<feature type="region of interest" description="Disordered" evidence="5">
    <location>
        <begin position="1096"/>
        <end position="1125"/>
    </location>
</feature>
<feature type="region of interest" description="Interaction with EZR" evidence="6">
    <location>
        <begin position="1137"/>
        <end position="1226"/>
    </location>
</feature>
<feature type="region of interest" description="Interaction with EZR" evidence="6">
    <location>
        <begin position="1236"/>
        <end position="1326"/>
    </location>
</feature>
<feature type="compositionally biased region" description="Basic and acidic residues" evidence="5">
    <location>
        <begin position="78"/>
        <end position="96"/>
    </location>
</feature>
<feature type="compositionally biased region" description="Polar residues" evidence="5">
    <location>
        <begin position="191"/>
        <end position="201"/>
    </location>
</feature>
<feature type="compositionally biased region" description="Low complexity" evidence="5">
    <location>
        <begin position="210"/>
        <end position="223"/>
    </location>
</feature>
<feature type="compositionally biased region" description="Pro residues" evidence="5">
    <location>
        <begin position="677"/>
        <end position="697"/>
    </location>
</feature>
<feature type="compositionally biased region" description="Low complexity" evidence="5">
    <location>
        <begin position="745"/>
        <end position="763"/>
    </location>
</feature>
<feature type="compositionally biased region" description="Pro residues" evidence="5">
    <location>
        <begin position="797"/>
        <end position="807"/>
    </location>
</feature>
<feature type="compositionally biased region" description="Pro residues" evidence="5">
    <location>
        <begin position="817"/>
        <end position="830"/>
    </location>
</feature>
<feature type="compositionally biased region" description="Polar residues" evidence="5">
    <location>
        <begin position="832"/>
        <end position="846"/>
    </location>
</feature>
<feature type="compositionally biased region" description="Low complexity" evidence="5">
    <location>
        <begin position="1098"/>
        <end position="1108"/>
    </location>
</feature>
<feature type="modified residue" description="Phosphoserine" evidence="3">
    <location>
        <position position="192"/>
    </location>
</feature>
<feature type="modified residue" description="Phosphoserine" evidence="27 29 31">
    <location>
        <position position="401"/>
    </location>
</feature>
<feature type="modified residue" description="Phosphoserine" evidence="3">
    <location>
        <position position="632"/>
    </location>
</feature>
<feature type="modified residue" description="Phosphothreonine" evidence="3">
    <location>
        <position position="635"/>
    </location>
</feature>
<feature type="modified residue" description="Phosphoserine" evidence="33">
    <location>
        <position position="641"/>
    </location>
</feature>
<feature type="modified residue" description="Phosphoserine" evidence="31">
    <location>
        <position position="684"/>
    </location>
</feature>
<feature type="modified residue" description="Phosphoserine" evidence="31">
    <location>
        <position position="688"/>
    </location>
</feature>
<feature type="modified residue" description="Phosphoserine" evidence="33">
    <location>
        <position position="728"/>
    </location>
</feature>
<feature type="modified residue" description="Phosphoserine" evidence="27 28 29 30 31 32 33 34">
    <location>
        <position position="893"/>
    </location>
</feature>
<feature type="modified residue" description="Phosphoserine" evidence="29 31">
    <location>
        <position position="979"/>
    </location>
</feature>
<feature type="modified residue" description="Phosphoserine" evidence="29 31">
    <location>
        <position position="984"/>
    </location>
</feature>
<feature type="modified residue" description="Phosphoserine" evidence="31">
    <location>
        <position position="1101"/>
    </location>
</feature>
<feature type="modified residue" description="Phosphoserine" evidence="31 32 34">
    <location>
        <position position="1104"/>
    </location>
</feature>
<feature type="modified residue" description="Phosphoserine" evidence="31">
    <location>
        <position position="1106"/>
    </location>
</feature>
<feature type="modified residue" description="Phosphoserine" evidence="31 32 33">
    <location>
        <position position="1116"/>
    </location>
</feature>
<feature type="modified residue" description="Phosphoserine; by PKB/AKT1" evidence="18 31 32 33">
    <location>
        <position position="1118"/>
    </location>
</feature>
<feature type="modified residue" description="Phosphoserine" evidence="28 31 32 33">
    <location>
        <position position="1121"/>
    </location>
</feature>
<feature type="modified residue" description="Phosphoserine" evidence="33">
    <location>
        <position position="1352"/>
    </location>
</feature>
<feature type="disulfide bond" evidence="4">
    <location>
        <begin position="292"/>
        <end position="344"/>
    </location>
</feature>
<feature type="disulfide bond" evidence="4">
    <location>
        <begin position="462"/>
        <end position="521"/>
    </location>
</feature>
<feature type="disulfide bond" evidence="4">
    <location>
        <begin position="1156"/>
        <end position="1208"/>
    </location>
</feature>
<feature type="splice variant" id="VSP_027925" description="In isoform 7." evidence="20 24">
    <location>
        <begin position="1"/>
        <end position="998"/>
    </location>
</feature>
<feature type="splice variant" id="VSP_027926" description="In isoform 4." evidence="19">
    <location>
        <begin position="1"/>
        <end position="711"/>
    </location>
</feature>
<feature type="splice variant" id="VSP_027927" description="In isoform 3 and isoform 8." evidence="21">
    <location>
        <begin position="1"/>
        <end position="382"/>
    </location>
</feature>
<feature type="splice variant" id="VSP_027928" description="In isoform 6." evidence="21">
    <original>PEEICTLVIAETFPEDAGIFTCSARNDYGSATSTAQLVVTSANTENCSYESMGESNNDHFQHFPPPPPILETSSLELASKKPSEIQQVNNPELGLSRAALQMQFNAAERETNGVHPSRGVNGLINGKANSNKSLPTPAVLLSPTKEPPPLLAKPKLDPLKLQQLQNQIRLEQEAGARQPPPAPRSAPPSPPFPPPPAFPELAACTPPASPEPMSALASRSAPAMQSSGSFNYARPKQFIAAQNLGPASGHGTPASSPSSSSLPSPMSPTPRQFGRAPVPPFAQPFGAEPEAPWGSSSPSPPPPPPPVFSPTAAFPVPDVFPLPPPPPPLPSPGQASHCSSPATRFGHSQTPAAFLSALLPSQPPPAAVNALGLPKGVTPAGFPKKASRTARIASDEEIQGTKDAVIQDLERKLRFKEDLLNNGQPRLTYEERMARRLLGADSATVFNIQEPEEETANQEYKVSSCEQRLISEIEYRLERSPVDESGDEVQYGDVPVENGMAPFFEMKLKHYKIFEGMPVTFTCRVAGNPKPKIYWFKDGKQISPKSDHYTIQRDLDGTCSLHTTASTLDDDGNYTIMAANPQGRISCTGRLMVQAVNQRGRSPRSPSGHPHVRRPRSRSRDSGDENEPIQERFFRPHFLQAPGDLTVQEGKLCRMDCKVSGLPTPDLSWQLDGKPVRPDSAHKMLVRENGVHSLIIEPVTSRDAGIYTCIATNRAGQNSFSLELVVAAKEAHKPPVFIEKLQNTGVADGYPVRLECRVLGVPPPQIFWKKENESLTHSTDRVSMHQDNHGYICLLIQGATKEDAGWYTVSAKNEAGIVSCTARLDVYTQWHQQSQSTKPKKVRPSASRYAALSDQGLDIKAAFQPEANPSHLTLNTALVESEDL</original>
    <variation>PDVLYVFVRVRCHQMKIQYYNLAHLISSWLSSFL</variation>
    <location>
        <begin position="500"/>
        <end position="1383"/>
    </location>
</feature>
<feature type="splice variant" id="VSP_027929" description="In isoform 2, isoform 5, isoform 8 and isoform 9." evidence="21 22 23 25">
    <location>
        <begin position="656"/>
        <end position="879"/>
    </location>
</feature>
<feature type="splice variant" id="VSP_043794" description="In isoform 9." evidence="22">
    <original>Q</original>
    <variation>QDIGSPHASVGSPLDGQK</variation>
    <location>
        <position position="957"/>
    </location>
</feature>
<feature type="splice variant" id="VSP_027930" description="In isoform 2." evidence="23 25">
    <original>YTQWHQQSQSTKPKKVRPSASRYAALSDQGLDIKAAFQPEANPSHLTLNTALVESEDL</original>
    <variation>YISRH</variation>
    <location>
        <begin position="1326"/>
        <end position="1383"/>
    </location>
</feature>
<feature type="splice variant" id="VSP_043795" description="In isoform 9." evidence="22">
    <original>TQWHQQSQSTKPKKVRPSASRYAALSDQGLDIKAAFQPEANPSHLTLNTALVESEDL</original>
    <variation>ISRH</variation>
    <location>
        <begin position="1327"/>
        <end position="1383"/>
    </location>
</feature>
<feature type="sequence variant" id="VAR_034940" description="In dbSNP:rs7671781.">
    <original>M</original>
    <variation>I</variation>
    <location>
        <position position="224"/>
    </location>
</feature>
<feature type="sequence variant" id="VAR_059401" description="In dbSNP:rs7655494." evidence="7">
    <original>M</original>
    <variation>T</variation>
    <location>
        <position position="224"/>
    </location>
</feature>
<feature type="sequence conflict" description="In Ref. 5; BAC04796." evidence="26" ref="5">
    <original>L</original>
    <variation>P</variation>
    <location>
        <position position="277"/>
    </location>
</feature>
<feature type="sequence conflict" description="In Ref. 5; BAC04796." evidence="26" ref="5">
    <original>V</original>
    <variation>D</variation>
    <location>
        <position position="472"/>
    </location>
</feature>
<feature type="sequence conflict" description="In Ref. 2; AAL69964." evidence="26" ref="2">
    <original>N</original>
    <variation>S</variation>
    <location>
        <position position="611"/>
    </location>
</feature>
<feature type="sequence conflict" description="In Ref. 3; BAA76836." evidence="26" ref="3">
    <original>S</original>
    <variation>G</variation>
    <location>
        <position position="847"/>
    </location>
</feature>
<feature type="sequence conflict" description="In Ref. 8; AAO65174." evidence="26" ref="8">
    <original>E</original>
    <variation>D</variation>
    <location>
        <position position="1126"/>
    </location>
</feature>
<feature type="sequence conflict" description="In Ref. 8; AAO65174." evidence="26" ref="8">
    <original>V</original>
    <variation>G</variation>
    <location>
        <position position="1146"/>
    </location>
</feature>
<feature type="strand" evidence="35">
    <location>
        <begin position="1003"/>
        <end position="1005"/>
    </location>
</feature>
<feature type="strand" evidence="35">
    <location>
        <begin position="1010"/>
        <end position="1013"/>
    </location>
</feature>
<feature type="strand" evidence="35">
    <location>
        <begin position="1018"/>
        <end position="1024"/>
    </location>
</feature>
<feature type="strand" evidence="35">
    <location>
        <begin position="1031"/>
        <end position="1035"/>
    </location>
</feature>
<feature type="strand" evidence="35">
    <location>
        <begin position="1046"/>
        <end position="1052"/>
    </location>
</feature>
<feature type="strand" evidence="35">
    <location>
        <begin position="1057"/>
        <end position="1064"/>
    </location>
</feature>
<feature type="turn" evidence="35">
    <location>
        <begin position="1067"/>
        <end position="1069"/>
    </location>
</feature>
<feature type="strand" evidence="35">
    <location>
        <begin position="1074"/>
        <end position="1078"/>
    </location>
</feature>
<feature type="strand" evidence="35">
    <location>
        <begin position="1084"/>
        <end position="1086"/>
    </location>
</feature>
<feature type="strand" evidence="35">
    <location>
        <begin position="1090"/>
        <end position="1093"/>
    </location>
</feature>
<feature type="strand" evidence="36">
    <location>
        <begin position="1136"/>
        <end position="1139"/>
    </location>
</feature>
<feature type="strand" evidence="36">
    <location>
        <begin position="1143"/>
        <end position="1150"/>
    </location>
</feature>
<feature type="strand" evidence="36">
    <location>
        <begin position="1155"/>
        <end position="1159"/>
    </location>
</feature>
<feature type="strand" evidence="36">
    <location>
        <begin position="1165"/>
        <end position="1167"/>
    </location>
</feature>
<feature type="strand" evidence="36">
    <location>
        <begin position="1169"/>
        <end position="1174"/>
    </location>
</feature>
<feature type="strand" evidence="36">
    <location>
        <begin position="1179"/>
        <end position="1185"/>
    </location>
</feature>
<feature type="strand" evidence="36">
    <location>
        <begin position="1191"/>
        <end position="1197"/>
    </location>
</feature>
<feature type="helix" evidence="36">
    <location>
        <begin position="1200"/>
        <end position="1202"/>
    </location>
</feature>
<feature type="strand" evidence="36">
    <location>
        <begin position="1204"/>
        <end position="1206"/>
    </location>
</feature>
<feature type="strand" evidence="36">
    <location>
        <begin position="1208"/>
        <end position="1211"/>
    </location>
</feature>
<feature type="strand" evidence="36">
    <location>
        <begin position="1216"/>
        <end position="1219"/>
    </location>
</feature>
<feature type="strand" evidence="36">
    <location>
        <begin position="1222"/>
        <end position="1226"/>
    </location>
</feature>
<dbReference type="EMBL" id="AF077041">
    <property type="protein sequence ID" value="AAD27774.1"/>
    <property type="molecule type" value="mRNA"/>
</dbReference>
<dbReference type="EMBL" id="AF464873">
    <property type="protein sequence ID" value="AAL69964.1"/>
    <property type="molecule type" value="mRNA"/>
</dbReference>
<dbReference type="EMBL" id="AB023209">
    <property type="protein sequence ID" value="BAA76836.1"/>
    <property type="status" value="ALT_INIT"/>
    <property type="molecule type" value="mRNA"/>
</dbReference>
<dbReference type="EMBL" id="AF151909">
    <property type="protein sequence ID" value="AAD34146.1"/>
    <property type="status" value="ALT_INIT"/>
    <property type="molecule type" value="mRNA"/>
</dbReference>
<dbReference type="EMBL" id="AK095512">
    <property type="protein sequence ID" value="BAG53074.1"/>
    <property type="molecule type" value="mRNA"/>
</dbReference>
<dbReference type="EMBL" id="AK096458">
    <property type="protein sequence ID" value="BAC04796.1"/>
    <property type="status" value="ALT_INIT"/>
    <property type="molecule type" value="mRNA"/>
</dbReference>
<dbReference type="EMBL" id="AC079858">
    <property type="status" value="NOT_ANNOTATED_CDS"/>
    <property type="molecule type" value="Genomic_DNA"/>
</dbReference>
<dbReference type="EMBL" id="AC079926">
    <property type="status" value="NOT_ANNOTATED_CDS"/>
    <property type="molecule type" value="Genomic_DNA"/>
</dbReference>
<dbReference type="EMBL" id="AC080188">
    <property type="status" value="NOT_ANNOTATED_CDS"/>
    <property type="molecule type" value="Genomic_DNA"/>
</dbReference>
<dbReference type="EMBL" id="AC084353">
    <property type="status" value="NOT_ANNOTATED_CDS"/>
    <property type="molecule type" value="Genomic_DNA"/>
</dbReference>
<dbReference type="EMBL" id="AC115538">
    <property type="status" value="NOT_ANNOTATED_CDS"/>
    <property type="molecule type" value="Genomic_DNA"/>
</dbReference>
<dbReference type="EMBL" id="BC013867">
    <property type="protein sequence ID" value="AAH13867.2"/>
    <property type="molecule type" value="mRNA"/>
</dbReference>
<dbReference type="EMBL" id="BC144666">
    <property type="protein sequence ID" value="AAI44667.1"/>
    <property type="molecule type" value="mRNA"/>
</dbReference>
<dbReference type="EMBL" id="AY211921">
    <property type="protein sequence ID" value="AAO65174.1"/>
    <property type="status" value="ALT_FRAME"/>
    <property type="molecule type" value="mRNA"/>
</dbReference>
<dbReference type="EMBL" id="BX537391">
    <property type="protein sequence ID" value="CAD97633.1"/>
    <property type="molecule type" value="mRNA"/>
</dbReference>
<dbReference type="CCDS" id="CCDS34098.1">
    <molecule id="Q8WX93-2"/>
</dbReference>
<dbReference type="CCDS" id="CCDS54818.1">
    <molecule id="Q8WX93-9"/>
</dbReference>
<dbReference type="CCDS" id="CCDS54819.1">
    <molecule id="Q8WX93-8"/>
</dbReference>
<dbReference type="CCDS" id="CCDS54820.1">
    <molecule id="Q8WX93-4"/>
</dbReference>
<dbReference type="PIR" id="T13078">
    <property type="entry name" value="T13078"/>
</dbReference>
<dbReference type="RefSeq" id="NP_001159580.1">
    <molecule id="Q8WX93-9"/>
    <property type="nucleotide sequence ID" value="NM_001166108.2"/>
</dbReference>
<dbReference type="RefSeq" id="NP_001159581.1">
    <molecule id="Q8WX93-8"/>
    <property type="nucleotide sequence ID" value="NM_001166109.2"/>
</dbReference>
<dbReference type="RefSeq" id="NP_001159582.1">
    <molecule id="Q8WX93-4"/>
    <property type="nucleotide sequence ID" value="NM_001166110.2"/>
</dbReference>
<dbReference type="RefSeq" id="NP_057165.3">
    <molecule id="Q8WX93-2"/>
    <property type="nucleotide sequence ID" value="NM_016081.3"/>
</dbReference>
<dbReference type="RefSeq" id="XP_047305821.1">
    <molecule id="Q8WX93-3"/>
    <property type="nucleotide sequence ID" value="XM_047449865.1"/>
</dbReference>
<dbReference type="RefSeq" id="XP_047305822.1">
    <molecule id="Q8WX93-8"/>
    <property type="nucleotide sequence ID" value="XM_047449866.1"/>
</dbReference>
<dbReference type="RefSeq" id="XP_054205326.1">
    <molecule id="Q8WX93-3"/>
    <property type="nucleotide sequence ID" value="XM_054349351.1"/>
</dbReference>
<dbReference type="RefSeq" id="XP_054205327.1">
    <molecule id="Q8WX93-8"/>
    <property type="nucleotide sequence ID" value="XM_054349352.1"/>
</dbReference>
<dbReference type="PDB" id="2DM2">
    <property type="method" value="NMR"/>
    <property type="chains" value="A=1000-1096"/>
</dbReference>
<dbReference type="PDB" id="2DM3">
    <property type="method" value="NMR"/>
    <property type="chains" value="A=1133-1229"/>
</dbReference>
<dbReference type="PDBsum" id="2DM2"/>
<dbReference type="PDBsum" id="2DM3"/>
<dbReference type="SMR" id="Q8WX93"/>
<dbReference type="BioGRID" id="116662">
    <property type="interactions" value="131"/>
</dbReference>
<dbReference type="FunCoup" id="Q8WX93">
    <property type="interactions" value="1053"/>
</dbReference>
<dbReference type="IntAct" id="Q8WX93">
    <property type="interactions" value="58"/>
</dbReference>
<dbReference type="MINT" id="Q8WX93"/>
<dbReference type="STRING" id="9606.ENSP00000425556"/>
<dbReference type="GlyCosmos" id="Q8WX93">
    <property type="glycosylation" value="1 site, 1 glycan"/>
</dbReference>
<dbReference type="GlyGen" id="Q8WX93">
    <property type="glycosylation" value="11 sites, 1 O-linked glycan (9 sites)"/>
</dbReference>
<dbReference type="iPTMnet" id="Q8WX93"/>
<dbReference type="MetOSite" id="Q8WX93"/>
<dbReference type="PhosphoSitePlus" id="Q8WX93"/>
<dbReference type="SwissPalm" id="Q8WX93"/>
<dbReference type="BioMuta" id="PALLD"/>
<dbReference type="DMDM" id="313104206"/>
<dbReference type="CPTAC" id="CPTAC-987"/>
<dbReference type="jPOST" id="Q8WX93"/>
<dbReference type="MassIVE" id="Q8WX93"/>
<dbReference type="PeptideAtlas" id="Q8WX93"/>
<dbReference type="ProteomicsDB" id="74979">
    <molecule id="Q8WX93-1"/>
</dbReference>
<dbReference type="ProteomicsDB" id="74980">
    <molecule id="Q8WX93-2"/>
</dbReference>
<dbReference type="ProteomicsDB" id="74981">
    <molecule id="Q8WX93-3"/>
</dbReference>
<dbReference type="ProteomicsDB" id="74982">
    <molecule id="Q8WX93-4"/>
</dbReference>
<dbReference type="ProteomicsDB" id="74983">
    <molecule id="Q8WX93-5"/>
</dbReference>
<dbReference type="ProteomicsDB" id="74984">
    <molecule id="Q8WX93-6"/>
</dbReference>
<dbReference type="ProteomicsDB" id="74985">
    <molecule id="Q8WX93-7"/>
</dbReference>
<dbReference type="ProteomicsDB" id="74986">
    <molecule id="Q8WX93-8"/>
</dbReference>
<dbReference type="ProteomicsDB" id="74987">
    <molecule id="Q8WX93-9"/>
</dbReference>
<dbReference type="Pumba" id="Q8WX93"/>
<dbReference type="Antibodypedia" id="28415">
    <property type="antibodies" value="320 antibodies from 36 providers"/>
</dbReference>
<dbReference type="DNASU" id="23022"/>
<dbReference type="Ensembl" id="ENST00000261509.10">
    <molecule id="Q8WX93-2"/>
    <property type="protein sequence ID" value="ENSP00000261509.6"/>
    <property type="gene ID" value="ENSG00000129116.20"/>
</dbReference>
<dbReference type="Ensembl" id="ENST00000505667.6">
    <molecule id="Q8WX93-9"/>
    <property type="protein sequence ID" value="ENSP00000425556.1"/>
    <property type="gene ID" value="ENSG00000129116.20"/>
</dbReference>
<dbReference type="Ensembl" id="ENST00000507735.6">
    <molecule id="Q8WX93-4"/>
    <property type="protein sequence ID" value="ENSP00000424016.1"/>
    <property type="gene ID" value="ENSG00000129116.20"/>
</dbReference>
<dbReference type="Ensembl" id="ENST00000512127.5">
    <molecule id="Q8WX93-8"/>
    <property type="protein sequence ID" value="ENSP00000426947.1"/>
    <property type="gene ID" value="ENSG00000129116.20"/>
</dbReference>
<dbReference type="GeneID" id="23022"/>
<dbReference type="KEGG" id="hsa:23022"/>
<dbReference type="MANE-Select" id="ENST00000505667.6">
    <molecule id="Q8WX93-9"/>
    <property type="protein sequence ID" value="ENSP00000425556.1"/>
    <property type="RefSeq nucleotide sequence ID" value="NM_001166108.2"/>
    <property type="RefSeq protein sequence ID" value="NP_001159580.1"/>
</dbReference>
<dbReference type="UCSC" id="uc003iru.3">
    <molecule id="Q8WX93-1"/>
    <property type="organism name" value="human"/>
</dbReference>
<dbReference type="AGR" id="HGNC:17068"/>
<dbReference type="CTD" id="23022"/>
<dbReference type="DisGeNET" id="23022"/>
<dbReference type="GeneCards" id="PALLD"/>
<dbReference type="HGNC" id="HGNC:17068">
    <property type="gene designation" value="PALLD"/>
</dbReference>
<dbReference type="HPA" id="ENSG00000129116">
    <property type="expression patterns" value="Low tissue specificity"/>
</dbReference>
<dbReference type="MalaCards" id="PALLD"/>
<dbReference type="MIM" id="606856">
    <property type="type" value="phenotype"/>
</dbReference>
<dbReference type="MIM" id="608092">
    <property type="type" value="gene"/>
</dbReference>
<dbReference type="neXtProt" id="NX_Q8WX93"/>
<dbReference type="OpenTargets" id="ENSG00000129116"/>
<dbReference type="Orphanet" id="1333">
    <property type="disease" value="Familial pancreatic carcinoma"/>
</dbReference>
<dbReference type="PharmGKB" id="PA142671205"/>
<dbReference type="VEuPathDB" id="HostDB:ENSG00000129116"/>
<dbReference type="eggNOG" id="ENOG502QSRV">
    <property type="taxonomic scope" value="Eukaryota"/>
</dbReference>
<dbReference type="GeneTree" id="ENSGT00940000153441"/>
<dbReference type="HOGENOM" id="CLU_006487_1_0_1"/>
<dbReference type="InParanoid" id="Q8WX93"/>
<dbReference type="OMA" id="XPRSRSR"/>
<dbReference type="OrthoDB" id="9533518at2759"/>
<dbReference type="PAN-GO" id="Q8WX93">
    <property type="GO annotations" value="6 GO annotations based on evolutionary models"/>
</dbReference>
<dbReference type="PhylomeDB" id="Q8WX93"/>
<dbReference type="TreeFam" id="TF343193"/>
<dbReference type="PathwayCommons" id="Q8WX93"/>
<dbReference type="SignaLink" id="Q8WX93"/>
<dbReference type="SIGNOR" id="Q8WX93"/>
<dbReference type="BioGRID-ORCS" id="23022">
    <property type="hits" value="9 hits in 1150 CRISPR screens"/>
</dbReference>
<dbReference type="CD-CODE" id="DEE660B4">
    <property type="entry name" value="Stress granule"/>
</dbReference>
<dbReference type="ChiTaRS" id="PALLD">
    <property type="organism name" value="human"/>
</dbReference>
<dbReference type="EvolutionaryTrace" id="Q8WX93"/>
<dbReference type="GeneWiki" id="Palladin"/>
<dbReference type="GenomeRNAi" id="23022"/>
<dbReference type="Pharos" id="Q8WX93">
    <property type="development level" value="Tbio"/>
</dbReference>
<dbReference type="PRO" id="PR:Q8WX93"/>
<dbReference type="Proteomes" id="UP000005640">
    <property type="component" value="Chromosome 4"/>
</dbReference>
<dbReference type="RNAct" id="Q8WX93">
    <property type="molecule type" value="protein"/>
</dbReference>
<dbReference type="Bgee" id="ENSG00000129116">
    <property type="expression patterns" value="Expressed in saphenous vein and 213 other cell types or tissues"/>
</dbReference>
<dbReference type="ExpressionAtlas" id="Q8WX93">
    <property type="expression patterns" value="baseline and differential"/>
</dbReference>
<dbReference type="GO" id="GO:0015629">
    <property type="term" value="C:actin cytoskeleton"/>
    <property type="evidence" value="ECO:0000314"/>
    <property type="project" value="HPA"/>
</dbReference>
<dbReference type="GO" id="GO:0005884">
    <property type="term" value="C:actin filament"/>
    <property type="evidence" value="ECO:0000314"/>
    <property type="project" value="HGNC-UCL"/>
</dbReference>
<dbReference type="GO" id="GO:0030424">
    <property type="term" value="C:axon"/>
    <property type="evidence" value="ECO:0000318"/>
    <property type="project" value="GO_Central"/>
</dbReference>
<dbReference type="GO" id="GO:0005829">
    <property type="term" value="C:cytosol"/>
    <property type="evidence" value="ECO:0000314"/>
    <property type="project" value="HPA"/>
</dbReference>
<dbReference type="GO" id="GO:0060076">
    <property type="term" value="C:excitatory synapse"/>
    <property type="evidence" value="ECO:0000250"/>
    <property type="project" value="UniProtKB"/>
</dbReference>
<dbReference type="GO" id="GO:0005925">
    <property type="term" value="C:focal adhesion"/>
    <property type="evidence" value="ECO:0000314"/>
    <property type="project" value="UniProtKB"/>
</dbReference>
<dbReference type="GO" id="GO:0030426">
    <property type="term" value="C:growth cone"/>
    <property type="evidence" value="ECO:0007669"/>
    <property type="project" value="UniProtKB-SubCell"/>
</dbReference>
<dbReference type="GO" id="GO:0030027">
    <property type="term" value="C:lamellipodium"/>
    <property type="evidence" value="ECO:0000314"/>
    <property type="project" value="UniProtKB"/>
</dbReference>
<dbReference type="GO" id="GO:0005739">
    <property type="term" value="C:mitochondrion"/>
    <property type="evidence" value="ECO:0000314"/>
    <property type="project" value="HPA"/>
</dbReference>
<dbReference type="GO" id="GO:0005634">
    <property type="term" value="C:nucleus"/>
    <property type="evidence" value="ECO:0000314"/>
    <property type="project" value="HGNC-UCL"/>
</dbReference>
<dbReference type="GO" id="GO:0005886">
    <property type="term" value="C:plasma membrane"/>
    <property type="evidence" value="ECO:0000314"/>
    <property type="project" value="HPA"/>
</dbReference>
<dbReference type="GO" id="GO:0002102">
    <property type="term" value="C:podosome"/>
    <property type="evidence" value="ECO:0007669"/>
    <property type="project" value="UniProtKB-SubCell"/>
</dbReference>
<dbReference type="GO" id="GO:0001726">
    <property type="term" value="C:ruffle"/>
    <property type="evidence" value="ECO:0007669"/>
    <property type="project" value="UniProtKB-SubCell"/>
</dbReference>
<dbReference type="GO" id="GO:0001725">
    <property type="term" value="C:stress fiber"/>
    <property type="evidence" value="ECO:0000314"/>
    <property type="project" value="UniProtKB"/>
</dbReference>
<dbReference type="GO" id="GO:0030018">
    <property type="term" value="C:Z disc"/>
    <property type="evidence" value="ECO:0000314"/>
    <property type="project" value="UniProtKB"/>
</dbReference>
<dbReference type="GO" id="GO:0003779">
    <property type="term" value="F:actin binding"/>
    <property type="evidence" value="ECO:0007669"/>
    <property type="project" value="UniProtKB-KW"/>
</dbReference>
<dbReference type="GO" id="GO:0098632">
    <property type="term" value="F:cell-cell adhesion mediator activity"/>
    <property type="evidence" value="ECO:0000318"/>
    <property type="project" value="GO_Central"/>
</dbReference>
<dbReference type="GO" id="GO:0051371">
    <property type="term" value="F:muscle alpha-actinin binding"/>
    <property type="evidence" value="ECO:0000304"/>
    <property type="project" value="HGNC-UCL"/>
</dbReference>
<dbReference type="GO" id="GO:0030036">
    <property type="term" value="P:actin cytoskeleton organization"/>
    <property type="evidence" value="ECO:0007669"/>
    <property type="project" value="Ensembl"/>
</dbReference>
<dbReference type="GO" id="GO:0007411">
    <property type="term" value="P:axon guidance"/>
    <property type="evidence" value="ECO:0000318"/>
    <property type="project" value="GO_Central"/>
</dbReference>
<dbReference type="GO" id="GO:0016477">
    <property type="term" value="P:cell migration"/>
    <property type="evidence" value="ECO:0007669"/>
    <property type="project" value="InterPro"/>
</dbReference>
<dbReference type="GO" id="GO:0007010">
    <property type="term" value="P:cytoskeleton organization"/>
    <property type="evidence" value="ECO:0000303"/>
    <property type="project" value="HGNC-UCL"/>
</dbReference>
<dbReference type="GO" id="GO:0070593">
    <property type="term" value="P:dendrite self-avoidance"/>
    <property type="evidence" value="ECO:0000318"/>
    <property type="project" value="GO_Central"/>
</dbReference>
<dbReference type="GO" id="GO:0003382">
    <property type="term" value="P:epithelial cell morphogenesis"/>
    <property type="evidence" value="ECO:0007669"/>
    <property type="project" value="Ensembl"/>
</dbReference>
<dbReference type="GO" id="GO:0007156">
    <property type="term" value="P:homophilic cell adhesion via plasma membrane adhesion molecules"/>
    <property type="evidence" value="ECO:0000318"/>
    <property type="project" value="GO_Central"/>
</dbReference>
<dbReference type="GO" id="GO:0003334">
    <property type="term" value="P:keratinocyte development"/>
    <property type="evidence" value="ECO:0007669"/>
    <property type="project" value="Ensembl"/>
</dbReference>
<dbReference type="CDD" id="cd05893">
    <property type="entry name" value="IgI_1_Palladin_C"/>
    <property type="match status" value="1"/>
</dbReference>
<dbReference type="CDD" id="cd20972">
    <property type="entry name" value="IgI_2_Titin_Z1z2-like"/>
    <property type="match status" value="1"/>
</dbReference>
<dbReference type="CDD" id="cd05892">
    <property type="entry name" value="IgI_Myotilin_C"/>
    <property type="match status" value="1"/>
</dbReference>
<dbReference type="FunFam" id="2.60.40.10:FF:000256">
    <property type="entry name" value="myopalladin isoform X1"/>
    <property type="match status" value="1"/>
</dbReference>
<dbReference type="FunFam" id="2.60.40.10:FF:000399">
    <property type="entry name" value="myopalladin isoform X1"/>
    <property type="match status" value="1"/>
</dbReference>
<dbReference type="FunFam" id="2.60.40.10:FF:001560">
    <property type="entry name" value="palladin isoform X1"/>
    <property type="match status" value="1"/>
</dbReference>
<dbReference type="FunFam" id="2.60.40.10:FF:000761">
    <property type="entry name" value="palladin isoform X2"/>
    <property type="match status" value="1"/>
</dbReference>
<dbReference type="FunFam" id="2.60.40.10:FF:001108">
    <property type="entry name" value="palladin isoform X2"/>
    <property type="match status" value="1"/>
</dbReference>
<dbReference type="Gene3D" id="2.60.40.10">
    <property type="entry name" value="Immunoglobulins"/>
    <property type="match status" value="5"/>
</dbReference>
<dbReference type="InterPro" id="IPR007110">
    <property type="entry name" value="Ig-like_dom"/>
</dbReference>
<dbReference type="InterPro" id="IPR036179">
    <property type="entry name" value="Ig-like_dom_sf"/>
</dbReference>
<dbReference type="InterPro" id="IPR013783">
    <property type="entry name" value="Ig-like_fold"/>
</dbReference>
<dbReference type="InterPro" id="IPR013098">
    <property type="entry name" value="Ig_I-set"/>
</dbReference>
<dbReference type="InterPro" id="IPR003599">
    <property type="entry name" value="Ig_sub"/>
</dbReference>
<dbReference type="InterPro" id="IPR003598">
    <property type="entry name" value="Ig_sub2"/>
</dbReference>
<dbReference type="InterPro" id="IPR033017">
    <property type="entry name" value="Palladin_C"/>
</dbReference>
<dbReference type="PANTHER" id="PTHR47633:SF16">
    <property type="entry name" value="CAVP-TARGET PROTEIN-LIKE"/>
    <property type="match status" value="1"/>
</dbReference>
<dbReference type="PANTHER" id="PTHR47633">
    <property type="entry name" value="IMMUNOGLOBULIN"/>
    <property type="match status" value="1"/>
</dbReference>
<dbReference type="Pfam" id="PF07679">
    <property type="entry name" value="I-set"/>
    <property type="match status" value="5"/>
</dbReference>
<dbReference type="SMART" id="SM00409">
    <property type="entry name" value="IG"/>
    <property type="match status" value="5"/>
</dbReference>
<dbReference type="SMART" id="SM00408">
    <property type="entry name" value="IGc2"/>
    <property type="match status" value="5"/>
</dbReference>
<dbReference type="SUPFAM" id="SSF48726">
    <property type="entry name" value="Immunoglobulin"/>
    <property type="match status" value="5"/>
</dbReference>
<dbReference type="PROSITE" id="PS50835">
    <property type="entry name" value="IG_LIKE"/>
    <property type="match status" value="5"/>
</dbReference>
<sequence length="1383" mass="150564">MSGTSSHESFYDSLSDMQEESKNTDFFPGLSAFLSQEEINKSLDLARRAIADSETEDFDSEKEISQIFSTSPASLCEHPSHKETKLGEHASRRPQDNRSTPVQPLAEKQTKSISSPVSKRKPAMSPLLTRPSYIRSLRKAEKRGAKTPSTNVKPKTPHQRKGGPQSQLCDKAANLIEELTSIFKAAKPRNRSPNGESSSPDSGYLSPKNQPSALLSASASQSPMEDQGEMEREVKSPGARHCYQDNQDLAVPHNRKSHPQPHSALHFPAAPRFIQKLRSQEVAEGSRVYLECRVTGNPTPRVRWFCEGKELHNTPDIQIHCEGGDLHTLIIAEAFEDDTGRYTCLATNPSGSDTTSAEVFIEGASSTDSDSESLAFKSRAGAMPQAQKKTTSVSLTIGSSSPKTGVTTAVIQPLSVPVQQVHSPTSYLCRPDGTTTAYFPPVFTKELQNTAVAEGQVVVLECRVRGAPPLQVQWFRQGSEIQDSPDFRILQKKPRSTAEPEEICTLVIAETFPEDAGIFTCSARNDYGSATSTAQLVVTSANTENCSYESMGESNNDHFQHFPPPPPILETSSLELASKKPSEIQQVNNPELGLSRAALQMQFNAAERETNGVHPSRGVNGLINGKANSNKSLPTPAVLLSPTKEPPPLLAKPKLDPLKLQQLQNQIRLEQEAGARQPPPAPRSAPPSPPFPPPPAFPELAACTPPASPEPMSALASRSAPAMQSSGSFNYARPKQFIAAQNLGPASGHGTPASSPSSSSLPSPMSPTPRQFGRAPVPPFAQPFGAEPEAPWGSSSPSPPPPPPPVFSPTAAFPVPDVFPLPPPPPPLPSPGQASHCSSPATRFGHSQTPAAFLSALLPSQPPPAAVNALGLPKGVTPAGFPKKASRTARIASDEEIQGTKDAVIQDLERKLRFKEDLLNNGQPRLTYEERMARRLLGADSATVFNIQEPEEETANQEYKVSSCEQRLISEIEYRLERSPVDESGDEVQYGDVPVENGMAPFFEMKLKHYKIFEGMPVTFTCRVAGNPKPKIYWFKDGKQISPKSDHYTIQRDLDGTCSLHTTASTLDDDGNYTIMAANPQGRISCTGRLMVQAVNQRGRSPRSPSGHPHVRRPRSRSRDSGDENEPIQERFFRPHFLQAPGDLTVQEGKLCRMDCKVSGLPTPDLSWQLDGKPVRPDSAHKMLVRENGVHSLIIEPVTSRDAGIYTCIATNRAGQNSFSLELVVAAKEAHKPPVFIEKLQNTGVADGYPVRLECRVLGVPPPQIFWKKENESLTHSTDRVSMHQDNHGYICLLIQGATKEDAGWYTVSAKNEAGIVSCTARLDVYTQWHQQSQSTKPKKVRPSASRYAALSDQGLDIKAAFQPEANPSHLTLNTALVESEDL</sequence>
<protein>
    <recommendedName>
        <fullName>Palladin</fullName>
    </recommendedName>
    <alternativeName>
        <fullName>SIH002</fullName>
    </alternativeName>
    <alternativeName>
        <fullName>Sarcoma antigen NY-SAR-77</fullName>
    </alternativeName>
</protein>
<reference key="1">
    <citation type="submission" date="1998-07" db="EMBL/GenBank/DDBJ databases">
        <title>Human SIH002 gene.</title>
        <authorList>
            <person name="Liu T."/>
            <person name="Zhang J."/>
            <person name="Ye M."/>
            <person name="Zhang Q."/>
            <person name="Fu G."/>
            <person name="Zhou J."/>
            <person name="Wu J."/>
            <person name="Shen Y."/>
            <person name="Yu M."/>
            <person name="Chen S."/>
            <person name="Mao M."/>
            <person name="Chen Z."/>
        </authorList>
    </citation>
    <scope>NUCLEOTIDE SEQUENCE [MRNA] (ISOFORM 7)</scope>
</reference>
<reference key="2">
    <citation type="submission" date="2001-12" db="EMBL/GenBank/DDBJ databases">
        <authorList>
            <person name="Lockwood S.K."/>
        </authorList>
    </citation>
    <scope>NUCLEOTIDE SEQUENCE [MRNA] (ISOFORM 2)</scope>
</reference>
<reference key="3">
    <citation type="journal article" date="1999" name="DNA Res.">
        <title>Prediction of the coding sequences of unidentified human genes. XIII. The complete sequences of 100 new cDNA clones from brain which code for large proteins in vitro.</title>
        <authorList>
            <person name="Nagase T."/>
            <person name="Ishikawa K."/>
            <person name="Suyama M."/>
            <person name="Kikuno R."/>
            <person name="Hirosawa M."/>
            <person name="Miyajima N."/>
            <person name="Tanaka A."/>
            <person name="Kotani H."/>
            <person name="Nomura N."/>
            <person name="Ohara O."/>
        </authorList>
    </citation>
    <scope>NUCLEOTIDE SEQUENCE [LARGE SCALE MRNA] (ISOFORM 4)</scope>
    <source>
        <tissue>Brain</tissue>
    </source>
</reference>
<reference key="4">
    <citation type="journal article" date="2000" name="Genome Res.">
        <title>Identification of novel human genes evolutionarily conserved in Caenorhabditis elegans by comparative proteomics.</title>
        <authorList>
            <person name="Lai C.-H."/>
            <person name="Chou C.-Y."/>
            <person name="Ch'ang L.-Y."/>
            <person name="Liu C.-S."/>
            <person name="Lin W.-C."/>
        </authorList>
    </citation>
    <scope>NUCLEOTIDE SEQUENCE [LARGE SCALE MRNA] (ISOFORM 7)</scope>
</reference>
<reference key="5">
    <citation type="journal article" date="2004" name="Nat. Genet.">
        <title>Complete sequencing and characterization of 21,243 full-length human cDNAs.</title>
        <authorList>
            <person name="Ota T."/>
            <person name="Suzuki Y."/>
            <person name="Nishikawa T."/>
            <person name="Otsuki T."/>
            <person name="Sugiyama T."/>
            <person name="Irie R."/>
            <person name="Wakamatsu A."/>
            <person name="Hayashi K."/>
            <person name="Sato H."/>
            <person name="Nagai K."/>
            <person name="Kimura K."/>
            <person name="Makita H."/>
            <person name="Sekine M."/>
            <person name="Obayashi M."/>
            <person name="Nishi T."/>
            <person name="Shibahara T."/>
            <person name="Tanaka T."/>
            <person name="Ishii S."/>
            <person name="Yamamoto J."/>
            <person name="Saito K."/>
            <person name="Kawai Y."/>
            <person name="Isono Y."/>
            <person name="Nakamura Y."/>
            <person name="Nagahari K."/>
            <person name="Murakami K."/>
            <person name="Yasuda T."/>
            <person name="Iwayanagi T."/>
            <person name="Wagatsuma M."/>
            <person name="Shiratori A."/>
            <person name="Sudo H."/>
            <person name="Hosoiri T."/>
            <person name="Kaku Y."/>
            <person name="Kodaira H."/>
            <person name="Kondo H."/>
            <person name="Sugawara M."/>
            <person name="Takahashi M."/>
            <person name="Kanda K."/>
            <person name="Yokoi T."/>
            <person name="Furuya T."/>
            <person name="Kikkawa E."/>
            <person name="Omura Y."/>
            <person name="Abe K."/>
            <person name="Kamihara K."/>
            <person name="Katsuta N."/>
            <person name="Sato K."/>
            <person name="Tanikawa M."/>
            <person name="Yamazaki M."/>
            <person name="Ninomiya K."/>
            <person name="Ishibashi T."/>
            <person name="Yamashita H."/>
            <person name="Murakawa K."/>
            <person name="Fujimori K."/>
            <person name="Tanai H."/>
            <person name="Kimata M."/>
            <person name="Watanabe M."/>
            <person name="Hiraoka S."/>
            <person name="Chiba Y."/>
            <person name="Ishida S."/>
            <person name="Ono Y."/>
            <person name="Takiguchi S."/>
            <person name="Watanabe S."/>
            <person name="Yosida M."/>
            <person name="Hotuta T."/>
            <person name="Kusano J."/>
            <person name="Kanehori K."/>
            <person name="Takahashi-Fujii A."/>
            <person name="Hara H."/>
            <person name="Tanase T.-O."/>
            <person name="Nomura Y."/>
            <person name="Togiya S."/>
            <person name="Komai F."/>
            <person name="Hara R."/>
            <person name="Takeuchi K."/>
            <person name="Arita M."/>
            <person name="Imose N."/>
            <person name="Musashino K."/>
            <person name="Yuuki H."/>
            <person name="Oshima A."/>
            <person name="Sasaki N."/>
            <person name="Aotsuka S."/>
            <person name="Yoshikawa Y."/>
            <person name="Matsunawa H."/>
            <person name="Ichihara T."/>
            <person name="Shiohata N."/>
            <person name="Sano S."/>
            <person name="Moriya S."/>
            <person name="Momiyama H."/>
            <person name="Satoh N."/>
            <person name="Takami S."/>
            <person name="Terashima Y."/>
            <person name="Suzuki O."/>
            <person name="Nakagawa S."/>
            <person name="Senoh A."/>
            <person name="Mizoguchi H."/>
            <person name="Goto Y."/>
            <person name="Shimizu F."/>
            <person name="Wakebe H."/>
            <person name="Hishigaki H."/>
            <person name="Watanabe T."/>
            <person name="Sugiyama A."/>
            <person name="Takemoto M."/>
            <person name="Kawakami B."/>
            <person name="Yamazaki M."/>
            <person name="Watanabe K."/>
            <person name="Kumagai A."/>
            <person name="Itakura S."/>
            <person name="Fukuzumi Y."/>
            <person name="Fujimori Y."/>
            <person name="Komiyama M."/>
            <person name="Tashiro H."/>
            <person name="Tanigami A."/>
            <person name="Fujiwara T."/>
            <person name="Ono T."/>
            <person name="Yamada K."/>
            <person name="Fujii Y."/>
            <person name="Ozaki K."/>
            <person name="Hirao M."/>
            <person name="Ohmori Y."/>
            <person name="Kawabata A."/>
            <person name="Hikiji T."/>
            <person name="Kobatake N."/>
            <person name="Inagaki H."/>
            <person name="Ikema Y."/>
            <person name="Okamoto S."/>
            <person name="Okitani R."/>
            <person name="Kawakami T."/>
            <person name="Noguchi S."/>
            <person name="Itoh T."/>
            <person name="Shigeta K."/>
            <person name="Senba T."/>
            <person name="Matsumura K."/>
            <person name="Nakajima Y."/>
            <person name="Mizuno T."/>
            <person name="Morinaga M."/>
            <person name="Sasaki M."/>
            <person name="Togashi T."/>
            <person name="Oyama M."/>
            <person name="Hata H."/>
            <person name="Watanabe M."/>
            <person name="Komatsu T."/>
            <person name="Mizushima-Sugano J."/>
            <person name="Satoh T."/>
            <person name="Shirai Y."/>
            <person name="Takahashi Y."/>
            <person name="Nakagawa K."/>
            <person name="Okumura K."/>
            <person name="Nagase T."/>
            <person name="Nomura N."/>
            <person name="Kikuchi H."/>
            <person name="Masuho Y."/>
            <person name="Yamashita R."/>
            <person name="Nakai K."/>
            <person name="Yada T."/>
            <person name="Nakamura Y."/>
            <person name="Ohara O."/>
            <person name="Isogai T."/>
            <person name="Sugano S."/>
        </authorList>
    </citation>
    <scope>NUCLEOTIDE SEQUENCE [LARGE SCALE MRNA] (ISOFORM 8)</scope>
    <scope>NUCLEOTIDE SEQUENCE [LARGE SCALE MRNA] OF 22-1383 (ISOFORM 6)</scope>
    <scope>VARIANT THR-224</scope>
    <source>
        <tissue>Tongue</tissue>
    </source>
</reference>
<reference key="6">
    <citation type="journal article" date="2005" name="Nature">
        <title>Generation and annotation of the DNA sequences of human chromosomes 2 and 4.</title>
        <authorList>
            <person name="Hillier L.W."/>
            <person name="Graves T.A."/>
            <person name="Fulton R.S."/>
            <person name="Fulton L.A."/>
            <person name="Pepin K.H."/>
            <person name="Minx P."/>
            <person name="Wagner-McPherson C."/>
            <person name="Layman D."/>
            <person name="Wylie K."/>
            <person name="Sekhon M."/>
            <person name="Becker M.C."/>
            <person name="Fewell G.A."/>
            <person name="Delehaunty K.D."/>
            <person name="Miner T.L."/>
            <person name="Nash W.E."/>
            <person name="Kremitzki C."/>
            <person name="Oddy L."/>
            <person name="Du H."/>
            <person name="Sun H."/>
            <person name="Bradshaw-Cordum H."/>
            <person name="Ali J."/>
            <person name="Carter J."/>
            <person name="Cordes M."/>
            <person name="Harris A."/>
            <person name="Isak A."/>
            <person name="van Brunt A."/>
            <person name="Nguyen C."/>
            <person name="Du F."/>
            <person name="Courtney L."/>
            <person name="Kalicki J."/>
            <person name="Ozersky P."/>
            <person name="Abbott S."/>
            <person name="Armstrong J."/>
            <person name="Belter E.A."/>
            <person name="Caruso L."/>
            <person name="Cedroni M."/>
            <person name="Cotton M."/>
            <person name="Davidson T."/>
            <person name="Desai A."/>
            <person name="Elliott G."/>
            <person name="Erb T."/>
            <person name="Fronick C."/>
            <person name="Gaige T."/>
            <person name="Haakenson W."/>
            <person name="Haglund K."/>
            <person name="Holmes A."/>
            <person name="Harkins R."/>
            <person name="Kim K."/>
            <person name="Kruchowski S.S."/>
            <person name="Strong C.M."/>
            <person name="Grewal N."/>
            <person name="Goyea E."/>
            <person name="Hou S."/>
            <person name="Levy A."/>
            <person name="Martinka S."/>
            <person name="Mead K."/>
            <person name="McLellan M.D."/>
            <person name="Meyer R."/>
            <person name="Randall-Maher J."/>
            <person name="Tomlinson C."/>
            <person name="Dauphin-Kohlberg S."/>
            <person name="Kozlowicz-Reilly A."/>
            <person name="Shah N."/>
            <person name="Swearengen-Shahid S."/>
            <person name="Snider J."/>
            <person name="Strong J.T."/>
            <person name="Thompson J."/>
            <person name="Yoakum M."/>
            <person name="Leonard S."/>
            <person name="Pearman C."/>
            <person name="Trani L."/>
            <person name="Radionenko M."/>
            <person name="Waligorski J.E."/>
            <person name="Wang C."/>
            <person name="Rock S.M."/>
            <person name="Tin-Wollam A.-M."/>
            <person name="Maupin R."/>
            <person name="Latreille P."/>
            <person name="Wendl M.C."/>
            <person name="Yang S.-P."/>
            <person name="Pohl C."/>
            <person name="Wallis J.W."/>
            <person name="Spieth J."/>
            <person name="Bieri T.A."/>
            <person name="Berkowicz N."/>
            <person name="Nelson J.O."/>
            <person name="Osborne J."/>
            <person name="Ding L."/>
            <person name="Meyer R."/>
            <person name="Sabo A."/>
            <person name="Shotland Y."/>
            <person name="Sinha P."/>
            <person name="Wohldmann P.E."/>
            <person name="Cook L.L."/>
            <person name="Hickenbotham M.T."/>
            <person name="Eldred J."/>
            <person name="Williams D."/>
            <person name="Jones T.A."/>
            <person name="She X."/>
            <person name="Ciccarelli F.D."/>
            <person name="Izaurralde E."/>
            <person name="Taylor J."/>
            <person name="Schmutz J."/>
            <person name="Myers R.M."/>
            <person name="Cox D.R."/>
            <person name="Huang X."/>
            <person name="McPherson J.D."/>
            <person name="Mardis E.R."/>
            <person name="Clifton S.W."/>
            <person name="Warren W.C."/>
            <person name="Chinwalla A.T."/>
            <person name="Eddy S.R."/>
            <person name="Marra M.A."/>
            <person name="Ovcharenko I."/>
            <person name="Furey T.S."/>
            <person name="Miller W."/>
            <person name="Eichler E.E."/>
            <person name="Bork P."/>
            <person name="Suyama M."/>
            <person name="Torrents D."/>
            <person name="Waterston R.H."/>
            <person name="Wilson R.K."/>
        </authorList>
    </citation>
    <scope>NUCLEOTIDE SEQUENCE [LARGE SCALE GENOMIC DNA]</scope>
</reference>
<reference key="7">
    <citation type="journal article" date="2004" name="Genome Res.">
        <title>The status, quality, and expansion of the NIH full-length cDNA project: the Mammalian Gene Collection (MGC).</title>
        <authorList>
            <consortium name="The MGC Project Team"/>
        </authorList>
    </citation>
    <scope>NUCLEOTIDE SEQUENCE [LARGE SCALE MRNA] (ISOFORM 9)</scope>
    <scope>NUCLEOTIDE SEQUENCE [LARGE SCALE MRNA] OF 874-1383 (ISOFORM 1)</scope>
    <source>
        <tissue>Placenta</tissue>
    </source>
</reference>
<reference key="8">
    <citation type="journal article" date="2003" name="Proc. Natl. Acad. Sci. U.S.A.">
        <title>Immunomic analysis of human sarcoma.</title>
        <authorList>
            <person name="Lee S.-Y."/>
            <person name="Obata Y."/>
            <person name="Yoshida M."/>
            <person name="Stockert E."/>
            <person name="Williamson B."/>
            <person name="Jungbluth A.A."/>
            <person name="Chen Y.-T."/>
            <person name="Old L.J."/>
            <person name="Scanlan M.J."/>
        </authorList>
    </citation>
    <scope>NUCLEOTIDE SEQUENCE [MRNA] OF 874-1160 (ISOFORM 1)</scope>
</reference>
<reference key="9">
    <citation type="journal article" date="2007" name="BMC Genomics">
        <title>The full-ORF clone resource of the German cDNA consortium.</title>
        <authorList>
            <person name="Bechtel S."/>
            <person name="Rosenfelder H."/>
            <person name="Duda A."/>
            <person name="Schmidt C.P."/>
            <person name="Ernst U."/>
            <person name="Wellenreuther R."/>
            <person name="Mehrle A."/>
            <person name="Schuster C."/>
            <person name="Bahr A."/>
            <person name="Bloecker H."/>
            <person name="Heubner D."/>
            <person name="Hoerlein A."/>
            <person name="Michel G."/>
            <person name="Wedler H."/>
            <person name="Koehrer K."/>
            <person name="Ottenwaelder B."/>
            <person name="Poustka A."/>
            <person name="Wiemann S."/>
            <person name="Schupp I."/>
        </authorList>
    </citation>
    <scope>NUCLEOTIDE SEQUENCE [LARGE SCALE MRNA] OF 1188-1383 (ISOFORM 2)</scope>
    <source>
        <tissue>Heart</tissue>
    </source>
</reference>
<reference key="10">
    <citation type="journal article" date="2001" name="Mol. Biol. Cell">
        <title>Characterization of human palladin, a microfilament-associated protein.</title>
        <authorList>
            <person name="Mykkaenen O.-M."/>
            <person name="Groenholm M."/>
            <person name="Roenty M."/>
            <person name="Lalowski M."/>
            <person name="Salmikangas P."/>
            <person name="Suila H."/>
            <person name="Carpen O."/>
        </authorList>
    </citation>
    <scope>FUNCTION</scope>
    <scope>INTERACTION WITH EZR</scope>
    <scope>SUBCELLULAR LOCATION</scope>
    <scope>TISSUE SPECIFICITY</scope>
</reference>
<reference key="11">
    <citation type="journal article" date="2004" name="FEBS Lett.">
        <title>Molecular analysis of the interaction between palladin and alpha-actinin.</title>
        <authorList>
            <person name="Roenty M."/>
            <person name="Taivainen A."/>
            <person name="Moza M."/>
            <person name="Otey C.A."/>
            <person name="Carpen O."/>
        </authorList>
    </citation>
    <scope>FUNCTION</scope>
    <scope>INTERACTION WITH ACTN</scope>
</reference>
<reference key="12">
    <citation type="journal article" date="2005" name="Exp. Cell Res.">
        <title>Involvement of palladin and alpha-actinin in targeting of the Abl/Arg kinase adaptor ArgBP2 to the actin cytoskeleton.</title>
        <authorList>
            <person name="Roenty M."/>
            <person name="Taivainen A."/>
            <person name="Moza M."/>
            <person name="Kruh G.D."/>
            <person name="Ehler E."/>
            <person name="Carpen O."/>
        </authorList>
    </citation>
    <scope>INTERACTION WITH SORBS2</scope>
    <scope>SUBCELLULAR LOCATION</scope>
</reference>
<reference key="13">
    <citation type="journal article" date="2006" name="Cell">
        <title>Global, in vivo, and site-specific phosphorylation dynamics in signaling networks.</title>
        <authorList>
            <person name="Olsen J.V."/>
            <person name="Blagoev B."/>
            <person name="Gnad F."/>
            <person name="Macek B."/>
            <person name="Kumar C."/>
            <person name="Mortensen P."/>
            <person name="Mann M."/>
        </authorList>
    </citation>
    <scope>PHOSPHORYLATION [LARGE SCALE ANALYSIS] AT SER-893 AND SER-1121</scope>
    <scope>IDENTIFICATION BY MASS SPECTROMETRY [LARGE SCALE ANALYSIS]</scope>
    <source>
        <tissue>Cervix carcinoma</tissue>
    </source>
</reference>
<reference key="14">
    <citation type="journal article" date="2006" name="FEBS J.">
        <title>The proline-rich protein palladin is a binding partner for profilin.</title>
        <authorList>
            <person name="Boukhelifa M."/>
            <person name="Moza M."/>
            <person name="Johansson T."/>
            <person name="Rachlin A."/>
            <person name="Parast M."/>
            <person name="Huttelmaier S."/>
            <person name="Roy P."/>
            <person name="Jockusch B.M."/>
            <person name="Carpen O."/>
            <person name="Karlsson R."/>
            <person name="Otey C.A."/>
        </authorList>
    </citation>
    <scope>INTERACTION WITH PFN1</scope>
</reference>
<reference key="15">
    <citation type="journal article" date="2006" name="J. Invest. Dermatol.">
        <title>Isoform-specific regulation of the actin-organizing protein Palladin during TGF-beta1-induced myofibroblast differentiation.</title>
        <authorList>
            <person name="Roenty M.J."/>
            <person name="Leivonen S.-K."/>
            <person name="Hinz B."/>
            <person name="Rachlin A."/>
            <person name="Otey C.A."/>
            <person name="Kaehaeri V.-M."/>
            <person name="Carpen O.M."/>
        </authorList>
    </citation>
    <scope>CHARACTERIZATION (ISOFORMS 3 AND 4)</scope>
    <scope>INDUCTION</scope>
</reference>
<reference key="16">
    <citation type="journal article" date="2006" name="Nat. Biotechnol.">
        <title>A probability-based approach for high-throughput protein phosphorylation analysis and site localization.</title>
        <authorList>
            <person name="Beausoleil S.A."/>
            <person name="Villen J."/>
            <person name="Gerber S.A."/>
            <person name="Rush J."/>
            <person name="Gygi S.P."/>
        </authorList>
    </citation>
    <scope>PHOSPHORYLATION [LARGE SCALE ANALYSIS] AT SER-401 AND SER-893</scope>
    <scope>IDENTIFICATION BY MASS SPECTROMETRY [LARGE SCALE ANALYSIS]</scope>
    <source>
        <tissue>Cervix carcinoma</tissue>
    </source>
</reference>
<reference key="17">
    <citation type="journal article" date="2007" name="Circ. Res.">
        <title>Angiotensin II, focal adhesion kinase, and PRX1 enhance smooth muscle expression of lipoma preferred partner and its newly identified binding partner palladin to promote cell migration.</title>
        <authorList>
            <person name="Jin L."/>
            <person name="Kern M.J."/>
            <person name="Otey C.A."/>
            <person name="Wamhoff B.R."/>
            <person name="Somlyo A.V."/>
        </authorList>
    </citation>
    <scope>INTERACTION WITH LPP</scope>
    <scope>SUBCELLULAR LOCATION</scope>
</reference>
<reference key="18">
    <citation type="journal article" date="2007" name="Exp. Cell Res.">
        <title>Palladin interacts with SH3 domains of SPIN90 and Src and is required for Src-induced cytoskeletal remodeling.</title>
        <authorList>
            <person name="Ronty M."/>
            <person name="Taivainen A."/>
            <person name="Heiska L."/>
            <person name="Otey C."/>
            <person name="Ehler E."/>
            <person name="Song W.K."/>
            <person name="Carpen O."/>
        </authorList>
    </citation>
    <scope>FUNCTION</scope>
    <scope>INTERACTION WITH SPIN90 AND SRC</scope>
    <scope>SUBCELLULAR LOCATION</scope>
    <scope>PHOSPHORYLATION</scope>
</reference>
<reference key="19">
    <citation type="journal article" date="2006" name="PLoS Med.">
        <title>Palladin mutation causes familial pancreatic cancer and suggests a new cancer mechanism.</title>
        <authorList>
            <person name="Pogue-Geile K.L."/>
            <person name="Chen R."/>
            <person name="Bronner M.P."/>
            <person name="Crnogorac-Jurcevic T."/>
            <person name="Moyes K.W."/>
            <person name="Dowen S."/>
            <person name="Otey C.A."/>
            <person name="Crispin D.A."/>
            <person name="George R.D."/>
            <person name="Whitcomb D.C."/>
            <person name="Brentnall T.A."/>
        </authorList>
    </citation>
    <scope>INVOLVEMENT IN PNCA1</scope>
</reference>
<reference key="20">
    <citation type="journal article" date="2005" name="Am. J. Hum. Genet.">
        <title>Identification of four gene variants associated with myocardial infarction.</title>
        <authorList>
            <person name="Shiffman D."/>
            <person name="Ellis S.G."/>
            <person name="Rowland C.M."/>
            <person name="Malloy M.J."/>
            <person name="Luke M.M."/>
            <person name="Iakoubova O.A."/>
            <person name="Pullinger C.R."/>
            <person name="Cassano J."/>
            <person name="Aouizerat B.E."/>
            <person name="Fenwick R.G."/>
            <person name="Reitz R.E."/>
            <person name="Catanese J.J."/>
            <person name="Leong D.U."/>
            <person name="Zellner C."/>
            <person name="Sninsky J.J."/>
            <person name="Topol E.J."/>
            <person name="Devlin J.J."/>
            <person name="Kane J.P."/>
        </authorList>
    </citation>
    <scope>POSSIBLE INVOLVEMENT IN MYOCARDIAL INFARCTION</scope>
</reference>
<reference key="21">
    <citation type="journal article" date="2007" name="Hum. Genet.">
        <title>The P239S palladin variant does not account for a significant fraction of hereditary or early onset pancreas cancer.</title>
        <authorList>
            <person name="Zogopoulous G."/>
            <person name="Rothenmund H."/>
            <person name="Eppel A."/>
            <person name="Ash C."/>
            <person name="Akbari M.R."/>
            <person name="Hedley D."/>
            <person name="Narod S.A."/>
            <person name="Gallinger S."/>
        </authorList>
    </citation>
    <scope>INVOLVEMENT IN PNCA1</scope>
</reference>
<reference key="22">
    <citation type="journal article" date="2007" name="PLoS Med.">
        <title>Palladin mutation causes familial pancreatic cancer: absence in European families.</title>
        <authorList>
            <person name="Slater E."/>
            <person name="Amrillaeva V."/>
            <person name="Fendrich V."/>
            <person name="Bartsch D."/>
            <person name="Earl J."/>
            <person name="Vitone L.J."/>
            <person name="Neoptolemos J.P."/>
            <person name="Greenhalf W."/>
        </authorList>
    </citation>
    <scope>QUESTIONING OF INVOLVEMENT IN PNCA1</scope>
</reference>
<reference key="23">
    <citation type="journal article" date="2008" name="Proc. Natl. Acad. Sci. U.S.A.">
        <title>A quantitative atlas of mitotic phosphorylation.</title>
        <authorList>
            <person name="Dephoure N."/>
            <person name="Zhou C."/>
            <person name="Villen J."/>
            <person name="Beausoleil S.A."/>
            <person name="Bakalarski C.E."/>
            <person name="Elledge S.J."/>
            <person name="Gygi S.P."/>
        </authorList>
    </citation>
    <scope>PHOSPHORYLATION [LARGE SCALE ANALYSIS] AT SER-401; SER-893; SER-979 AND SER-984</scope>
    <scope>IDENTIFICATION BY MASS SPECTROMETRY [LARGE SCALE ANALYSIS]</scope>
    <source>
        <tissue>Cervix carcinoma</tissue>
    </source>
</reference>
<reference key="24">
    <citation type="journal article" date="2009" name="Sci. Signal.">
        <title>Quantitative phosphoproteomic analysis of T cell receptor signaling reveals system-wide modulation of protein-protein interactions.</title>
        <authorList>
            <person name="Mayya V."/>
            <person name="Lundgren D.H."/>
            <person name="Hwang S.-I."/>
            <person name="Rezaul K."/>
            <person name="Wu L."/>
            <person name="Eng J.K."/>
            <person name="Rodionov V."/>
            <person name="Han D.K."/>
        </authorList>
    </citation>
    <scope>PHOSPHORYLATION [LARGE SCALE ANALYSIS] AT SER-893</scope>
    <scope>IDENTIFICATION BY MASS SPECTROMETRY [LARGE SCALE ANALYSIS]</scope>
    <source>
        <tissue>Leukemic T-cell</tissue>
    </source>
</reference>
<reference key="25">
    <citation type="journal article" date="2010" name="Mol. Cell">
        <title>The actin-bundling protein palladin is an Akt1-specific substrate that regulates breast cancer cell migration.</title>
        <authorList>
            <person name="Chin Y.R."/>
            <person name="Toker A."/>
        </authorList>
    </citation>
    <scope>PHOSPHORYLATION AT SER-1118</scope>
</reference>
<reference key="26">
    <citation type="journal article" date="2010" name="Sci. Signal.">
        <title>Quantitative phosphoproteomics reveals widespread full phosphorylation site occupancy during mitosis.</title>
        <authorList>
            <person name="Olsen J.V."/>
            <person name="Vermeulen M."/>
            <person name="Santamaria A."/>
            <person name="Kumar C."/>
            <person name="Miller M.L."/>
            <person name="Jensen L.J."/>
            <person name="Gnad F."/>
            <person name="Cox J."/>
            <person name="Jensen T.S."/>
            <person name="Nigg E.A."/>
            <person name="Brunak S."/>
            <person name="Mann M."/>
        </authorList>
    </citation>
    <scope>PHOSPHORYLATION [LARGE SCALE ANALYSIS] AT SER-401; SER-684; SER-688; SER-893; SER-979; SER-984; SER-1101; SER-1104; SER-1106; SER-1116; SER-1118 AND SER-1121</scope>
    <scope>IDENTIFICATION BY MASS SPECTROMETRY [LARGE SCALE ANALYSIS]</scope>
    <source>
        <tissue>Cervix carcinoma</tissue>
    </source>
</reference>
<reference key="27">
    <citation type="journal article" date="2011" name="BMC Syst. Biol.">
        <title>Initial characterization of the human central proteome.</title>
        <authorList>
            <person name="Burkard T.R."/>
            <person name="Planyavsky M."/>
            <person name="Kaupe I."/>
            <person name="Breitwieser F.P."/>
            <person name="Buerckstuemmer T."/>
            <person name="Bennett K.L."/>
            <person name="Superti-Furga G."/>
            <person name="Colinge J."/>
        </authorList>
    </citation>
    <scope>IDENTIFICATION BY MASS SPECTROMETRY [LARGE SCALE ANALYSIS]</scope>
</reference>
<reference key="28">
    <citation type="journal article" date="2011" name="Sci. Signal.">
        <title>System-wide temporal characterization of the proteome and phosphoproteome of human embryonic stem cell differentiation.</title>
        <authorList>
            <person name="Rigbolt K.T."/>
            <person name="Prokhorova T.A."/>
            <person name="Akimov V."/>
            <person name="Henningsen J."/>
            <person name="Johansen P.T."/>
            <person name="Kratchmarova I."/>
            <person name="Kassem M."/>
            <person name="Mann M."/>
            <person name="Olsen J.V."/>
            <person name="Blagoev B."/>
        </authorList>
    </citation>
    <scope>PHOSPHORYLATION [LARGE SCALE ANALYSIS] AT SER-893; SER-1104; SER-1116; SER-1118 AND SER-1121</scope>
    <scope>IDENTIFICATION BY MASS SPECTROMETRY [LARGE SCALE ANALYSIS]</scope>
</reference>
<reference key="29">
    <citation type="journal article" date="2013" name="J. Proteome Res.">
        <title>Toward a comprehensive characterization of a human cancer cell phosphoproteome.</title>
        <authorList>
            <person name="Zhou H."/>
            <person name="Di Palma S."/>
            <person name="Preisinger C."/>
            <person name="Peng M."/>
            <person name="Polat A.N."/>
            <person name="Heck A.J."/>
            <person name="Mohammed S."/>
        </authorList>
    </citation>
    <scope>PHOSPHORYLATION [LARGE SCALE ANALYSIS] AT SER-641; SER-728; SER-893; SER-1116; SER-1118; SER-1121 AND SER-1352</scope>
    <scope>IDENTIFICATION BY MASS SPECTROMETRY [LARGE SCALE ANALYSIS]</scope>
    <source>
        <tissue>Cervix carcinoma</tissue>
    </source>
</reference>
<reference key="30">
    <citation type="journal article" date="2014" name="J. Proteomics">
        <title>An enzyme assisted RP-RPLC approach for in-depth analysis of human liver phosphoproteome.</title>
        <authorList>
            <person name="Bian Y."/>
            <person name="Song C."/>
            <person name="Cheng K."/>
            <person name="Dong M."/>
            <person name="Wang F."/>
            <person name="Huang J."/>
            <person name="Sun D."/>
            <person name="Wang L."/>
            <person name="Ye M."/>
            <person name="Zou H."/>
        </authorList>
    </citation>
    <scope>PHOSPHORYLATION [LARGE SCALE ANALYSIS] AT SER-893 AND SER-1104</scope>
    <scope>IDENTIFICATION BY MASS SPECTROMETRY [LARGE SCALE ANALYSIS]</scope>
    <source>
        <tissue>Liver</tissue>
    </source>
</reference>
<reference key="31">
    <citation type="journal article" date="2006" name="Acta Crystallogr. F">
        <title>Expression, crystallization and preliminary X-ray studies of the immunoglobulin-like domain 3 of human palladin.</title>
        <authorList>
            <person name="Liang W."/>
            <person name="Yang H."/>
            <person name="Xue X."/>
            <person name="Huang Q."/>
            <person name="Bartlam M."/>
            <person name="Chen S."/>
        </authorList>
    </citation>
    <scope>X-RAY CRYSTALLOGRAPHY (1.8 ANGSTROMS) OF 1233-1324</scope>
</reference>
<reference key="32">
    <citation type="submission" date="2007-04" db="PDB data bank">
        <title>Solution structure of the first and second Ig domains of human palladin.</title>
        <authorList>
            <consortium name="RIKEN structural genomics initiative (RSGI)"/>
        </authorList>
    </citation>
    <scope>STRUCTURE BY NMR OF 1000-1230</scope>
</reference>
<name>PALLD_HUMAN</name>